<proteinExistence type="inferred from homology"/>
<accession>B1YGU9</accession>
<evidence type="ECO:0000255" key="1">
    <source>
        <dbReference type="HAMAP-Rule" id="MF_00508"/>
    </source>
</evidence>
<evidence type="ECO:0000305" key="2"/>
<reference key="1">
    <citation type="submission" date="2008-04" db="EMBL/GenBank/DDBJ databases">
        <title>Complete sequence of chromosome of Exiguobacterium sibiricum 255-15.</title>
        <authorList>
            <consortium name="US DOE Joint Genome Institute"/>
            <person name="Copeland A."/>
            <person name="Lucas S."/>
            <person name="Lapidus A."/>
            <person name="Glavina del Rio T."/>
            <person name="Dalin E."/>
            <person name="Tice H."/>
            <person name="Bruce D."/>
            <person name="Goodwin L."/>
            <person name="Pitluck S."/>
            <person name="Kiss H."/>
            <person name="Chertkov O."/>
            <person name="Monk C."/>
            <person name="Brettin T."/>
            <person name="Detter J.C."/>
            <person name="Han C."/>
            <person name="Kuske C.R."/>
            <person name="Schmutz J."/>
            <person name="Larimer F."/>
            <person name="Land M."/>
            <person name="Hauser L."/>
            <person name="Kyrpides N."/>
            <person name="Mikhailova N."/>
            <person name="Vishnivetskaya T."/>
            <person name="Rodrigues D.F."/>
            <person name="Gilichinsky D."/>
            <person name="Tiedje J."/>
            <person name="Richardson P."/>
        </authorList>
    </citation>
    <scope>NUCLEOTIDE SEQUENCE [LARGE SCALE GENOMIC DNA]</scope>
    <source>
        <strain>DSM 17290 / CCUG 55495 / CIP 109462 / JCM 13490 / 255-15</strain>
    </source>
</reference>
<keyword id="KW-1185">Reference proteome</keyword>
<keyword id="KW-0687">Ribonucleoprotein</keyword>
<keyword id="KW-0689">Ribosomal protein</keyword>
<organism>
    <name type="scientific">Exiguobacterium sibiricum (strain DSM 17290 / CCUG 55495 / CIP 109462 / JCM 13490 / 255-15)</name>
    <dbReference type="NCBI Taxonomy" id="262543"/>
    <lineage>
        <taxon>Bacteria</taxon>
        <taxon>Bacillati</taxon>
        <taxon>Bacillota</taxon>
        <taxon>Bacilli</taxon>
        <taxon>Bacillales</taxon>
        <taxon>Bacillales Family XII. Incertae Sedis</taxon>
        <taxon>Exiguobacterium</taxon>
    </lineage>
</organism>
<comment type="function">
    <text evidence="1">Involved in the binding of tRNA to the ribosomes.</text>
</comment>
<comment type="subunit">
    <text evidence="1">Part of the 30S ribosomal subunit.</text>
</comment>
<comment type="similarity">
    <text evidence="1">Belongs to the universal ribosomal protein uS10 family.</text>
</comment>
<sequence>MANEKIRIRLKAYDHRVLDQSAEKIVETAKRSGATVSGPIPLPTEKAIYTVLRAVHKYKDAREQFEMRTHKRLIDIVNPTPKTVDALMRLELPSGVDIEIKL</sequence>
<dbReference type="EMBL" id="CP001022">
    <property type="protein sequence ID" value="ACB59582.1"/>
    <property type="molecule type" value="Genomic_DNA"/>
</dbReference>
<dbReference type="RefSeq" id="WP_012369008.1">
    <property type="nucleotide sequence ID" value="NC_010556.1"/>
</dbReference>
<dbReference type="SMR" id="B1YGU9"/>
<dbReference type="STRING" id="262543.Exig_0095"/>
<dbReference type="KEGG" id="esi:Exig_0095"/>
<dbReference type="eggNOG" id="COG0051">
    <property type="taxonomic scope" value="Bacteria"/>
</dbReference>
<dbReference type="HOGENOM" id="CLU_122625_1_3_9"/>
<dbReference type="OrthoDB" id="9804464at2"/>
<dbReference type="Proteomes" id="UP000001681">
    <property type="component" value="Chromosome"/>
</dbReference>
<dbReference type="GO" id="GO:1990904">
    <property type="term" value="C:ribonucleoprotein complex"/>
    <property type="evidence" value="ECO:0007669"/>
    <property type="project" value="UniProtKB-KW"/>
</dbReference>
<dbReference type="GO" id="GO:0005840">
    <property type="term" value="C:ribosome"/>
    <property type="evidence" value="ECO:0007669"/>
    <property type="project" value="UniProtKB-KW"/>
</dbReference>
<dbReference type="GO" id="GO:0003735">
    <property type="term" value="F:structural constituent of ribosome"/>
    <property type="evidence" value="ECO:0007669"/>
    <property type="project" value="InterPro"/>
</dbReference>
<dbReference type="GO" id="GO:0000049">
    <property type="term" value="F:tRNA binding"/>
    <property type="evidence" value="ECO:0007669"/>
    <property type="project" value="UniProtKB-UniRule"/>
</dbReference>
<dbReference type="GO" id="GO:0006412">
    <property type="term" value="P:translation"/>
    <property type="evidence" value="ECO:0007669"/>
    <property type="project" value="UniProtKB-UniRule"/>
</dbReference>
<dbReference type="FunFam" id="3.30.70.600:FF:000001">
    <property type="entry name" value="30S ribosomal protein S10"/>
    <property type="match status" value="1"/>
</dbReference>
<dbReference type="Gene3D" id="3.30.70.600">
    <property type="entry name" value="Ribosomal protein S10 domain"/>
    <property type="match status" value="1"/>
</dbReference>
<dbReference type="HAMAP" id="MF_00508">
    <property type="entry name" value="Ribosomal_uS10"/>
    <property type="match status" value="1"/>
</dbReference>
<dbReference type="InterPro" id="IPR001848">
    <property type="entry name" value="Ribosomal_uS10"/>
</dbReference>
<dbReference type="InterPro" id="IPR018268">
    <property type="entry name" value="Ribosomal_uS10_CS"/>
</dbReference>
<dbReference type="InterPro" id="IPR027486">
    <property type="entry name" value="Ribosomal_uS10_dom"/>
</dbReference>
<dbReference type="InterPro" id="IPR036838">
    <property type="entry name" value="Ribosomal_uS10_dom_sf"/>
</dbReference>
<dbReference type="NCBIfam" id="NF001861">
    <property type="entry name" value="PRK00596.1"/>
    <property type="match status" value="1"/>
</dbReference>
<dbReference type="NCBIfam" id="TIGR01049">
    <property type="entry name" value="rpsJ_bact"/>
    <property type="match status" value="1"/>
</dbReference>
<dbReference type="PANTHER" id="PTHR11700">
    <property type="entry name" value="30S RIBOSOMAL PROTEIN S10 FAMILY MEMBER"/>
    <property type="match status" value="1"/>
</dbReference>
<dbReference type="Pfam" id="PF00338">
    <property type="entry name" value="Ribosomal_S10"/>
    <property type="match status" value="1"/>
</dbReference>
<dbReference type="PRINTS" id="PR00971">
    <property type="entry name" value="RIBOSOMALS10"/>
</dbReference>
<dbReference type="SMART" id="SM01403">
    <property type="entry name" value="Ribosomal_S10"/>
    <property type="match status" value="1"/>
</dbReference>
<dbReference type="SUPFAM" id="SSF54999">
    <property type="entry name" value="Ribosomal protein S10"/>
    <property type="match status" value="1"/>
</dbReference>
<dbReference type="PROSITE" id="PS00361">
    <property type="entry name" value="RIBOSOMAL_S10"/>
    <property type="match status" value="1"/>
</dbReference>
<name>RS10_EXIS2</name>
<feature type="chain" id="PRO_1000127126" description="Small ribosomal subunit protein uS10">
    <location>
        <begin position="1"/>
        <end position="102"/>
    </location>
</feature>
<protein>
    <recommendedName>
        <fullName evidence="1">Small ribosomal subunit protein uS10</fullName>
    </recommendedName>
    <alternativeName>
        <fullName evidence="2">30S ribosomal protein S10</fullName>
    </alternativeName>
</protein>
<gene>
    <name evidence="1" type="primary">rpsJ</name>
    <name type="ordered locus">Exig_0095</name>
</gene>